<accession>A7ZIJ5</accession>
<protein>
    <recommendedName>
        <fullName evidence="1">ATP-dependent Clp protease proteolytic subunit</fullName>
        <ecNumber evidence="1">3.4.21.92</ecNumber>
    </recommendedName>
    <alternativeName>
        <fullName evidence="1">Endopeptidase Clp</fullName>
    </alternativeName>
</protein>
<gene>
    <name evidence="1" type="primary">clpP</name>
    <name type="ordered locus">EcE24377A_0473</name>
</gene>
<feature type="chain" id="PRO_1000060259" description="ATP-dependent Clp protease proteolytic subunit">
    <location>
        <begin position="1"/>
        <end position="207"/>
    </location>
</feature>
<feature type="active site" description="Nucleophile" evidence="1">
    <location>
        <position position="111"/>
    </location>
</feature>
<feature type="active site" evidence="1">
    <location>
        <position position="136"/>
    </location>
</feature>
<evidence type="ECO:0000255" key="1">
    <source>
        <dbReference type="HAMAP-Rule" id="MF_00444"/>
    </source>
</evidence>
<proteinExistence type="inferred from homology"/>
<keyword id="KW-0963">Cytoplasm</keyword>
<keyword id="KW-0378">Hydrolase</keyword>
<keyword id="KW-0645">Protease</keyword>
<keyword id="KW-1185">Reference proteome</keyword>
<keyword id="KW-0720">Serine protease</keyword>
<comment type="function">
    <text evidence="1">Cleaves peptides in various proteins in a process that requires ATP hydrolysis. Has a chymotrypsin-like activity. Plays a major role in the degradation of misfolded proteins.</text>
</comment>
<comment type="catalytic activity">
    <reaction evidence="1">
        <text>Hydrolysis of proteins to small peptides in the presence of ATP and magnesium. alpha-casein is the usual test substrate. In the absence of ATP, only oligopeptides shorter than five residues are hydrolyzed (such as succinyl-Leu-Tyr-|-NHMec, and Leu-Tyr-Leu-|-Tyr-Trp, in which cleavage of the -Tyr-|-Leu- and -Tyr-|-Trp bonds also occurs).</text>
        <dbReference type="EC" id="3.4.21.92"/>
    </reaction>
</comment>
<comment type="subunit">
    <text evidence="1">Fourteen ClpP subunits assemble into 2 heptameric rings which stack back to back to give a disk-like structure with a central cavity, resembling the structure of eukaryotic proteasomes. Component of the ClpAP and ClpXP complexes.</text>
</comment>
<comment type="subcellular location">
    <subcellularLocation>
        <location evidence="1">Cytoplasm</location>
    </subcellularLocation>
</comment>
<comment type="similarity">
    <text evidence="1">Belongs to the peptidase S14 family.</text>
</comment>
<reference key="1">
    <citation type="journal article" date="2008" name="J. Bacteriol.">
        <title>The pangenome structure of Escherichia coli: comparative genomic analysis of E. coli commensal and pathogenic isolates.</title>
        <authorList>
            <person name="Rasko D.A."/>
            <person name="Rosovitz M.J."/>
            <person name="Myers G.S.A."/>
            <person name="Mongodin E.F."/>
            <person name="Fricke W.F."/>
            <person name="Gajer P."/>
            <person name="Crabtree J."/>
            <person name="Sebaihia M."/>
            <person name="Thomson N.R."/>
            <person name="Chaudhuri R."/>
            <person name="Henderson I.R."/>
            <person name="Sperandio V."/>
            <person name="Ravel J."/>
        </authorList>
    </citation>
    <scope>NUCLEOTIDE SEQUENCE [LARGE SCALE GENOMIC DNA]</scope>
    <source>
        <strain>E24377A / ETEC</strain>
    </source>
</reference>
<organism>
    <name type="scientific">Escherichia coli O139:H28 (strain E24377A / ETEC)</name>
    <dbReference type="NCBI Taxonomy" id="331111"/>
    <lineage>
        <taxon>Bacteria</taxon>
        <taxon>Pseudomonadati</taxon>
        <taxon>Pseudomonadota</taxon>
        <taxon>Gammaproteobacteria</taxon>
        <taxon>Enterobacterales</taxon>
        <taxon>Enterobacteriaceae</taxon>
        <taxon>Escherichia</taxon>
    </lineage>
</organism>
<name>CLPP_ECO24</name>
<sequence>MSYSGERDNFAPHMALVPMVIEQTSRGERSFDIYSRLLKERVIFLTGQVEDHMANLIVAQMLFLEAENPEKDIYLYINSPGGVITAGMSIYDTMQFIKPDVSTICMGQAASMGAFLLTAGAKGKRFCLPNSRVMIHQPLGGYQGQATDIEIHAREILKVKGRMNELMALHTGQSLEQIERDTERDRFLSAPEAVEYGLVDSILTHRN</sequence>
<dbReference type="EC" id="3.4.21.92" evidence="1"/>
<dbReference type="EMBL" id="CP000800">
    <property type="protein sequence ID" value="ABV20037.1"/>
    <property type="molecule type" value="Genomic_DNA"/>
</dbReference>
<dbReference type="RefSeq" id="WP_000122253.1">
    <property type="nucleotide sequence ID" value="NC_009801.1"/>
</dbReference>
<dbReference type="BMRB" id="A7ZIJ5"/>
<dbReference type="SMR" id="A7ZIJ5"/>
<dbReference type="MEROPS" id="S14.001"/>
<dbReference type="GeneID" id="93777017"/>
<dbReference type="KEGG" id="ecw:EcE24377A_0473"/>
<dbReference type="HOGENOM" id="CLU_058707_3_2_6"/>
<dbReference type="Proteomes" id="UP000001122">
    <property type="component" value="Chromosome"/>
</dbReference>
<dbReference type="GO" id="GO:0005737">
    <property type="term" value="C:cytoplasm"/>
    <property type="evidence" value="ECO:0007669"/>
    <property type="project" value="UniProtKB-SubCell"/>
</dbReference>
<dbReference type="GO" id="GO:0009368">
    <property type="term" value="C:endopeptidase Clp complex"/>
    <property type="evidence" value="ECO:0007669"/>
    <property type="project" value="TreeGrafter"/>
</dbReference>
<dbReference type="GO" id="GO:0004176">
    <property type="term" value="F:ATP-dependent peptidase activity"/>
    <property type="evidence" value="ECO:0007669"/>
    <property type="project" value="InterPro"/>
</dbReference>
<dbReference type="GO" id="GO:0051117">
    <property type="term" value="F:ATPase binding"/>
    <property type="evidence" value="ECO:0007669"/>
    <property type="project" value="TreeGrafter"/>
</dbReference>
<dbReference type="GO" id="GO:0004252">
    <property type="term" value="F:serine-type endopeptidase activity"/>
    <property type="evidence" value="ECO:0007669"/>
    <property type="project" value="UniProtKB-UniRule"/>
</dbReference>
<dbReference type="GO" id="GO:0006515">
    <property type="term" value="P:protein quality control for misfolded or incompletely synthesized proteins"/>
    <property type="evidence" value="ECO:0007669"/>
    <property type="project" value="TreeGrafter"/>
</dbReference>
<dbReference type="CDD" id="cd07017">
    <property type="entry name" value="S14_ClpP_2"/>
    <property type="match status" value="1"/>
</dbReference>
<dbReference type="FunFam" id="3.90.226.10:FF:000001">
    <property type="entry name" value="ATP-dependent Clp protease proteolytic subunit"/>
    <property type="match status" value="1"/>
</dbReference>
<dbReference type="Gene3D" id="3.90.226.10">
    <property type="entry name" value="2-enoyl-CoA Hydratase, Chain A, domain 1"/>
    <property type="match status" value="1"/>
</dbReference>
<dbReference type="HAMAP" id="MF_00444">
    <property type="entry name" value="ClpP"/>
    <property type="match status" value="1"/>
</dbReference>
<dbReference type="InterPro" id="IPR001907">
    <property type="entry name" value="ClpP"/>
</dbReference>
<dbReference type="InterPro" id="IPR029045">
    <property type="entry name" value="ClpP/crotonase-like_dom_sf"/>
</dbReference>
<dbReference type="InterPro" id="IPR023562">
    <property type="entry name" value="ClpP/TepA"/>
</dbReference>
<dbReference type="InterPro" id="IPR033135">
    <property type="entry name" value="ClpP_His_AS"/>
</dbReference>
<dbReference type="InterPro" id="IPR018215">
    <property type="entry name" value="ClpP_Ser_AS"/>
</dbReference>
<dbReference type="NCBIfam" id="TIGR00493">
    <property type="entry name" value="clpP"/>
    <property type="match status" value="1"/>
</dbReference>
<dbReference type="NCBIfam" id="NF001368">
    <property type="entry name" value="PRK00277.1"/>
    <property type="match status" value="1"/>
</dbReference>
<dbReference type="NCBIfam" id="NF009205">
    <property type="entry name" value="PRK12553.1"/>
    <property type="match status" value="1"/>
</dbReference>
<dbReference type="PANTHER" id="PTHR10381">
    <property type="entry name" value="ATP-DEPENDENT CLP PROTEASE PROTEOLYTIC SUBUNIT"/>
    <property type="match status" value="1"/>
</dbReference>
<dbReference type="PANTHER" id="PTHR10381:SF70">
    <property type="entry name" value="ATP-DEPENDENT CLP PROTEASE PROTEOLYTIC SUBUNIT"/>
    <property type="match status" value="1"/>
</dbReference>
<dbReference type="Pfam" id="PF00574">
    <property type="entry name" value="CLP_protease"/>
    <property type="match status" value="1"/>
</dbReference>
<dbReference type="PRINTS" id="PR00127">
    <property type="entry name" value="CLPPROTEASEP"/>
</dbReference>
<dbReference type="SUPFAM" id="SSF52096">
    <property type="entry name" value="ClpP/crotonase"/>
    <property type="match status" value="1"/>
</dbReference>
<dbReference type="PROSITE" id="PS00382">
    <property type="entry name" value="CLP_PROTEASE_HIS"/>
    <property type="match status" value="1"/>
</dbReference>
<dbReference type="PROSITE" id="PS00381">
    <property type="entry name" value="CLP_PROTEASE_SER"/>
    <property type="match status" value="1"/>
</dbReference>